<proteinExistence type="evidence at protein level"/>
<sequence>MAAGTSNYWEDLRKQARQLENELDLKLVSFSKLCTSYSHSSARDGGRDRYSSDTTPLLNGSSQDRMFETMAIEIEQLLARLTGVNDKMAEYTNSAGVPSLNAALMHTLQRHRDILQDYTHEFHKTKANFMAIRERENLMGSVRKDIESYKSGSGVNNRRTELFLKEHDHLRNSDRLIEETISIAMATKENMTSQRGMLKSIHSKMNTLANRFPAVNSLIQRINLRKRRDSLILGGVIGICTILLLLYAFH</sequence>
<keyword id="KW-0007">Acetylation</keyword>
<keyword id="KW-0175">Coiled coil</keyword>
<keyword id="KW-0903">Direct protein sequencing</keyword>
<keyword id="KW-0931">ER-Golgi transport</keyword>
<keyword id="KW-0333">Golgi apparatus</keyword>
<keyword id="KW-0472">Membrane</keyword>
<keyword id="KW-0597">Phosphoprotein</keyword>
<keyword id="KW-0653">Protein transport</keyword>
<keyword id="KW-0812">Transmembrane</keyword>
<keyword id="KW-1133">Transmembrane helix</keyword>
<keyword id="KW-0813">Transport</keyword>
<reference key="1">
    <citation type="journal article" date="1996" name="J. Cell Biol.">
        <title>A v-SNARE implicated in intra-Golgi transport.</title>
        <authorList>
            <person name="Nagahama M."/>
            <person name="Orci L."/>
            <person name="Ravazzola M."/>
            <person name="Amherdt M."/>
            <person name="Lacomis L."/>
            <person name="Tempst P."/>
            <person name="Rothman J.E."/>
            <person name="Soellner T.H."/>
        </authorList>
    </citation>
    <scope>NUCLEOTIDE SEQUENCE [MRNA]</scope>
    <scope>PROTEIN SEQUENCE OF 19-24; 66-80; 88-108; 111-124; 134-141 AND 159-171</scope>
    <scope>FUNCTION</scope>
    <scope>SUBCELLULAR LOCATION</scope>
</reference>
<comment type="function">
    <text evidence="5">Involved in transport from the ER to the Golgi apparatus as well as in intra-Golgi transport. It belongs to a super-family of proteins called t-SNAREs or soluble NSF (N-ethylmaleimide-sensitive factor) attachment protein receptor. May play a protective role against hydrogen peroxide induced cytotoxicity under glutathione depleted conditions in neuronal cells by regulating the intracellular ROS levels via inhibition of p38 MAPK (MAPK11, MAPK12, MAPK13 and MAPK14). Participates in docking and fusion stage of ER to cis-Golgi transport. Plays an important physiological role in VLDL-transport vesicle-Golgi fusion and thus in VLDL delivery to the hepatic cis-Golgi.</text>
</comment>
<comment type="subunit">
    <text evidence="1">Component of several multiprotein Golgi SNARE complexes. Identified in a SNARE complex with BET1, STX5 and YKT6, in a SNARE complex with BET1L, STX5 and YKT6, in a SNARE complex with STX5, GOSR2, SEC22B and BET1, and in complex with STX5 and COG3. Interacts with GABARAPL2 (By similarity).</text>
</comment>
<comment type="subcellular location">
    <subcellularLocation>
        <location evidence="5">Golgi apparatus membrane</location>
        <topology evidence="5">Single-pass type IV membrane protein</topology>
    </subcellularLocation>
    <text evidence="1">Localizes throughout the Golgi apparatus, with lowest levels in the trans-Golgi network. Enriched on vesicular components at the terminal rims of the Golgi (By similarity).</text>
</comment>
<comment type="similarity">
    <text evidence="6">Belongs to the GOSR1 family.</text>
</comment>
<comment type="caution">
    <text evidence="6">Formerly referred to as a v-SNARE.</text>
</comment>
<organism>
    <name type="scientific">Cricetulus griseus</name>
    <name type="common">Chinese hamster</name>
    <name type="synonym">Cricetulus barabensis griseus</name>
    <dbReference type="NCBI Taxonomy" id="10029"/>
    <lineage>
        <taxon>Eukaryota</taxon>
        <taxon>Metazoa</taxon>
        <taxon>Chordata</taxon>
        <taxon>Craniata</taxon>
        <taxon>Vertebrata</taxon>
        <taxon>Euteleostomi</taxon>
        <taxon>Mammalia</taxon>
        <taxon>Eutheria</taxon>
        <taxon>Euarchontoglires</taxon>
        <taxon>Glires</taxon>
        <taxon>Rodentia</taxon>
        <taxon>Myomorpha</taxon>
        <taxon>Muroidea</taxon>
        <taxon>Cricetidae</taxon>
        <taxon>Cricetinae</taxon>
        <taxon>Cricetulus</taxon>
    </lineage>
</organism>
<protein>
    <recommendedName>
        <fullName>Golgi SNAP receptor complex member 1</fullName>
    </recommendedName>
    <alternativeName>
        <fullName>28 kDa Golgi SNARE protein</fullName>
    </alternativeName>
    <alternativeName>
        <fullName>28 kDa cis-Golgi SNARE p28</fullName>
        <shortName>GOS-28</shortName>
    </alternativeName>
</protein>
<gene>
    <name type="primary">GOSR1</name>
    <name type="synonym">GS28</name>
</gene>
<accession>O08522</accession>
<feature type="initiator methionine" description="Removed" evidence="2">
    <location>
        <position position="1"/>
    </location>
</feature>
<feature type="chain" id="PRO_0000212541" description="Golgi SNAP receptor complex member 1">
    <location>
        <begin position="2"/>
        <end position="250"/>
    </location>
</feature>
<feature type="topological domain" description="Cytoplasmic" evidence="3">
    <location>
        <begin position="2"/>
        <end position="229"/>
    </location>
</feature>
<feature type="transmembrane region" description="Helical; Anchor for type IV membrane protein" evidence="3">
    <location>
        <begin position="230"/>
        <end position="250"/>
    </location>
</feature>
<feature type="region of interest" description="Disordered" evidence="4">
    <location>
        <begin position="38"/>
        <end position="59"/>
    </location>
</feature>
<feature type="coiled-coil region" evidence="3">
    <location>
        <begin position="9"/>
        <end position="30"/>
    </location>
</feature>
<feature type="coiled-coil region" evidence="3">
    <location>
        <begin position="68"/>
        <end position="95"/>
    </location>
</feature>
<feature type="compositionally biased region" description="Basic and acidic residues" evidence="4">
    <location>
        <begin position="41"/>
        <end position="51"/>
    </location>
</feature>
<feature type="modified residue" description="N-acetylalanine" evidence="2">
    <location>
        <position position="2"/>
    </location>
</feature>
<feature type="modified residue" description="Phosphoserine" evidence="2">
    <location>
        <position position="141"/>
    </location>
</feature>
<evidence type="ECO:0000250" key="1"/>
<evidence type="ECO:0000250" key="2">
    <source>
        <dbReference type="UniProtKB" id="O95249"/>
    </source>
</evidence>
<evidence type="ECO:0000255" key="3"/>
<evidence type="ECO:0000256" key="4">
    <source>
        <dbReference type="SAM" id="MobiDB-lite"/>
    </source>
</evidence>
<evidence type="ECO:0000269" key="5">
    <source>
    </source>
</evidence>
<evidence type="ECO:0000305" key="6"/>
<name>GOSR1_CRIGR</name>
<dbReference type="EMBL" id="U49841">
    <property type="protein sequence ID" value="AAB51019.1"/>
    <property type="molecule type" value="mRNA"/>
</dbReference>
<dbReference type="RefSeq" id="NP_001233674.1">
    <property type="nucleotide sequence ID" value="NM_001246745.1"/>
</dbReference>
<dbReference type="SMR" id="O08522"/>
<dbReference type="PaxDb" id="10029-NP_001233674.1"/>
<dbReference type="Ensembl" id="ENSCGRT00001017728.1">
    <property type="protein sequence ID" value="ENSCGRP00001013491.1"/>
    <property type="gene ID" value="ENSCGRG00001014609.1"/>
</dbReference>
<dbReference type="GeneID" id="100689312"/>
<dbReference type="KEGG" id="cge:100689312"/>
<dbReference type="CTD" id="9527"/>
<dbReference type="eggNOG" id="KOG3208">
    <property type="taxonomic scope" value="Eukaryota"/>
</dbReference>
<dbReference type="GeneTree" id="ENSGT00390000008688"/>
<dbReference type="OrthoDB" id="422156at2759"/>
<dbReference type="Proteomes" id="UP000694386">
    <property type="component" value="Unplaced"/>
</dbReference>
<dbReference type="Proteomes" id="UP001108280">
    <property type="component" value="Chromosome 7"/>
</dbReference>
<dbReference type="GO" id="GO:0005801">
    <property type="term" value="C:cis-Golgi network"/>
    <property type="evidence" value="ECO:0007669"/>
    <property type="project" value="InterPro"/>
</dbReference>
<dbReference type="GO" id="GO:0005797">
    <property type="term" value="C:Golgi medial cisterna"/>
    <property type="evidence" value="ECO:0007669"/>
    <property type="project" value="TreeGrafter"/>
</dbReference>
<dbReference type="GO" id="GO:0000139">
    <property type="term" value="C:Golgi membrane"/>
    <property type="evidence" value="ECO:0007669"/>
    <property type="project" value="UniProtKB-SubCell"/>
</dbReference>
<dbReference type="GO" id="GO:0000138">
    <property type="term" value="C:Golgi trans cisterna"/>
    <property type="evidence" value="ECO:0000314"/>
    <property type="project" value="UniProtKB"/>
</dbReference>
<dbReference type="GO" id="GO:0031201">
    <property type="term" value="C:SNARE complex"/>
    <property type="evidence" value="ECO:0007669"/>
    <property type="project" value="TreeGrafter"/>
</dbReference>
<dbReference type="GO" id="GO:0005484">
    <property type="term" value="F:SNAP receptor activity"/>
    <property type="evidence" value="ECO:0000303"/>
    <property type="project" value="UniProtKB"/>
</dbReference>
<dbReference type="GO" id="GO:0006888">
    <property type="term" value="P:endoplasmic reticulum to Golgi vesicle-mediated transport"/>
    <property type="evidence" value="ECO:0000314"/>
    <property type="project" value="UniProtKB"/>
</dbReference>
<dbReference type="GO" id="GO:0048219">
    <property type="term" value="P:inter-Golgi cisterna vesicle-mediated transport"/>
    <property type="evidence" value="ECO:0007669"/>
    <property type="project" value="TreeGrafter"/>
</dbReference>
<dbReference type="GO" id="GO:0006891">
    <property type="term" value="P:intra-Golgi vesicle-mediated transport"/>
    <property type="evidence" value="ECO:0000314"/>
    <property type="project" value="UniProtKB"/>
</dbReference>
<dbReference type="GO" id="GO:0015031">
    <property type="term" value="P:protein transport"/>
    <property type="evidence" value="ECO:0007669"/>
    <property type="project" value="UniProtKB-KW"/>
</dbReference>
<dbReference type="GO" id="GO:0006906">
    <property type="term" value="P:vesicle fusion"/>
    <property type="evidence" value="ECO:0007669"/>
    <property type="project" value="TreeGrafter"/>
</dbReference>
<dbReference type="CDD" id="cd15864">
    <property type="entry name" value="SNARE_GS28"/>
    <property type="match status" value="1"/>
</dbReference>
<dbReference type="InterPro" id="IPR023601">
    <property type="entry name" value="Golgi_SNAP_su1"/>
</dbReference>
<dbReference type="PANTHER" id="PTHR21094:SF2">
    <property type="entry name" value="GOLGI SNAP RECEPTOR COMPLEX MEMBER 1"/>
    <property type="match status" value="1"/>
</dbReference>
<dbReference type="PANTHER" id="PTHR21094">
    <property type="entry name" value="GOS-28 SNARE- RELATED"/>
    <property type="match status" value="1"/>
</dbReference>
<dbReference type="Pfam" id="PF12352">
    <property type="entry name" value="V-SNARE_C"/>
    <property type="match status" value="1"/>
</dbReference>
<dbReference type="PIRSF" id="PIRSF027109">
    <property type="entry name" value="Golgi_SNARE"/>
    <property type="match status" value="1"/>
</dbReference>